<gene>
    <name evidence="1" type="primary">efp</name>
    <name type="ordered locus">PMT_0031</name>
</gene>
<evidence type="ECO:0000255" key="1">
    <source>
        <dbReference type="HAMAP-Rule" id="MF_00141"/>
    </source>
</evidence>
<accession>Q7V9B9</accession>
<comment type="function">
    <text evidence="1">Involved in peptide bond synthesis. Stimulates efficient translation and peptide-bond synthesis on native or reconstituted 70S ribosomes in vitro. Probably functions indirectly by altering the affinity of the ribosome for aminoacyl-tRNA, thus increasing their reactivity as acceptors for peptidyl transferase.</text>
</comment>
<comment type="pathway">
    <text evidence="1">Protein biosynthesis; polypeptide chain elongation.</text>
</comment>
<comment type="subcellular location">
    <subcellularLocation>
        <location evidence="1">Cytoplasm</location>
    </subcellularLocation>
</comment>
<comment type="similarity">
    <text evidence="1">Belongs to the elongation factor P family.</text>
</comment>
<feature type="chain" id="PRO_0000094308" description="Elongation factor P">
    <location>
        <begin position="1"/>
        <end position="186"/>
    </location>
</feature>
<organism>
    <name type="scientific">Prochlorococcus marinus (strain MIT 9313)</name>
    <dbReference type="NCBI Taxonomy" id="74547"/>
    <lineage>
        <taxon>Bacteria</taxon>
        <taxon>Bacillati</taxon>
        <taxon>Cyanobacteriota</taxon>
        <taxon>Cyanophyceae</taxon>
        <taxon>Synechococcales</taxon>
        <taxon>Prochlorococcaceae</taxon>
        <taxon>Prochlorococcus</taxon>
    </lineage>
</organism>
<sequence length="186" mass="20495">MISSNDFRTGTSIELDGSVWRVVEFLHVKPGKGSAFVRTKLKAVQSGNVVEKTFRAGEMLPQALLEKSTLQHTYMESGDYVFMDMSSYEETRLTAQQIGDSRKYLKEGMEVNVVSWNGNPLEVELPNSVVLEITETDPGVKGDTATGGTKPAILETGAQVMVPLFLSVGEKIKVDTRNDSYLGREN</sequence>
<proteinExistence type="inferred from homology"/>
<protein>
    <recommendedName>
        <fullName evidence="1">Elongation factor P</fullName>
        <shortName evidence="1">EF-P</shortName>
    </recommendedName>
</protein>
<keyword id="KW-0963">Cytoplasm</keyword>
<keyword id="KW-0251">Elongation factor</keyword>
<keyword id="KW-0648">Protein biosynthesis</keyword>
<keyword id="KW-1185">Reference proteome</keyword>
<name>EFP_PROMM</name>
<reference key="1">
    <citation type="journal article" date="2003" name="Nature">
        <title>Genome divergence in two Prochlorococcus ecotypes reflects oceanic niche differentiation.</title>
        <authorList>
            <person name="Rocap G."/>
            <person name="Larimer F.W."/>
            <person name="Lamerdin J.E."/>
            <person name="Malfatti S."/>
            <person name="Chain P."/>
            <person name="Ahlgren N.A."/>
            <person name="Arellano A."/>
            <person name="Coleman M."/>
            <person name="Hauser L."/>
            <person name="Hess W.R."/>
            <person name="Johnson Z.I."/>
            <person name="Land M.L."/>
            <person name="Lindell D."/>
            <person name="Post A.F."/>
            <person name="Regala W."/>
            <person name="Shah M."/>
            <person name="Shaw S.L."/>
            <person name="Steglich C."/>
            <person name="Sullivan M.B."/>
            <person name="Ting C.S."/>
            <person name="Tolonen A."/>
            <person name="Webb E.A."/>
            <person name="Zinser E.R."/>
            <person name="Chisholm S.W."/>
        </authorList>
    </citation>
    <scope>NUCLEOTIDE SEQUENCE [LARGE SCALE GENOMIC DNA]</scope>
    <source>
        <strain>MIT 9313</strain>
    </source>
</reference>
<dbReference type="EMBL" id="BX548175">
    <property type="protein sequence ID" value="CAE20206.1"/>
    <property type="molecule type" value="Genomic_DNA"/>
</dbReference>
<dbReference type="RefSeq" id="WP_011129410.1">
    <property type="nucleotide sequence ID" value="NC_005071.1"/>
</dbReference>
<dbReference type="SMR" id="Q7V9B9"/>
<dbReference type="KEGG" id="pmt:PMT_0031"/>
<dbReference type="eggNOG" id="COG0231">
    <property type="taxonomic scope" value="Bacteria"/>
</dbReference>
<dbReference type="HOGENOM" id="CLU_074944_0_1_3"/>
<dbReference type="OrthoDB" id="9801844at2"/>
<dbReference type="UniPathway" id="UPA00345"/>
<dbReference type="Proteomes" id="UP000001423">
    <property type="component" value="Chromosome"/>
</dbReference>
<dbReference type="GO" id="GO:0005737">
    <property type="term" value="C:cytoplasm"/>
    <property type="evidence" value="ECO:0007669"/>
    <property type="project" value="UniProtKB-SubCell"/>
</dbReference>
<dbReference type="GO" id="GO:0003746">
    <property type="term" value="F:translation elongation factor activity"/>
    <property type="evidence" value="ECO:0007669"/>
    <property type="project" value="UniProtKB-UniRule"/>
</dbReference>
<dbReference type="GO" id="GO:0043043">
    <property type="term" value="P:peptide biosynthetic process"/>
    <property type="evidence" value="ECO:0007669"/>
    <property type="project" value="InterPro"/>
</dbReference>
<dbReference type="CDD" id="cd04470">
    <property type="entry name" value="S1_EF-P_repeat_1"/>
    <property type="match status" value="1"/>
</dbReference>
<dbReference type="CDD" id="cd05794">
    <property type="entry name" value="S1_EF-P_repeat_2"/>
    <property type="match status" value="1"/>
</dbReference>
<dbReference type="FunFam" id="2.30.30.30:FF:000003">
    <property type="entry name" value="Elongation factor P"/>
    <property type="match status" value="1"/>
</dbReference>
<dbReference type="FunFam" id="2.40.50.140:FF:000004">
    <property type="entry name" value="Elongation factor P"/>
    <property type="match status" value="1"/>
</dbReference>
<dbReference type="FunFam" id="2.40.50.140:FF:000009">
    <property type="entry name" value="Elongation factor P"/>
    <property type="match status" value="1"/>
</dbReference>
<dbReference type="Gene3D" id="2.30.30.30">
    <property type="match status" value="1"/>
</dbReference>
<dbReference type="Gene3D" id="2.40.50.140">
    <property type="entry name" value="Nucleic acid-binding proteins"/>
    <property type="match status" value="2"/>
</dbReference>
<dbReference type="HAMAP" id="MF_00141">
    <property type="entry name" value="EF_P"/>
    <property type="match status" value="1"/>
</dbReference>
<dbReference type="InterPro" id="IPR015365">
    <property type="entry name" value="Elong-fact-P_C"/>
</dbReference>
<dbReference type="InterPro" id="IPR012340">
    <property type="entry name" value="NA-bd_OB-fold"/>
</dbReference>
<dbReference type="InterPro" id="IPR014722">
    <property type="entry name" value="Rib_uL2_dom2"/>
</dbReference>
<dbReference type="InterPro" id="IPR020599">
    <property type="entry name" value="Transl_elong_fac_P/YeiP"/>
</dbReference>
<dbReference type="InterPro" id="IPR013185">
    <property type="entry name" value="Transl_elong_KOW-like"/>
</dbReference>
<dbReference type="InterPro" id="IPR001059">
    <property type="entry name" value="Transl_elong_P/YeiP_cen"/>
</dbReference>
<dbReference type="InterPro" id="IPR013852">
    <property type="entry name" value="Transl_elong_P/YeiP_CS"/>
</dbReference>
<dbReference type="InterPro" id="IPR011768">
    <property type="entry name" value="Transl_elongation_fac_P"/>
</dbReference>
<dbReference type="InterPro" id="IPR008991">
    <property type="entry name" value="Translation_prot_SH3-like_sf"/>
</dbReference>
<dbReference type="NCBIfam" id="TIGR00038">
    <property type="entry name" value="efp"/>
    <property type="match status" value="1"/>
</dbReference>
<dbReference type="NCBIfam" id="NF001810">
    <property type="entry name" value="PRK00529.1"/>
    <property type="match status" value="1"/>
</dbReference>
<dbReference type="PANTHER" id="PTHR30053">
    <property type="entry name" value="ELONGATION FACTOR P"/>
    <property type="match status" value="1"/>
</dbReference>
<dbReference type="PANTHER" id="PTHR30053:SF12">
    <property type="entry name" value="ELONGATION FACTOR P (EF-P) FAMILY PROTEIN"/>
    <property type="match status" value="1"/>
</dbReference>
<dbReference type="Pfam" id="PF01132">
    <property type="entry name" value="EFP"/>
    <property type="match status" value="1"/>
</dbReference>
<dbReference type="Pfam" id="PF08207">
    <property type="entry name" value="EFP_N"/>
    <property type="match status" value="1"/>
</dbReference>
<dbReference type="Pfam" id="PF09285">
    <property type="entry name" value="Elong-fact-P_C"/>
    <property type="match status" value="1"/>
</dbReference>
<dbReference type="PIRSF" id="PIRSF005901">
    <property type="entry name" value="EF-P"/>
    <property type="match status" value="1"/>
</dbReference>
<dbReference type="SMART" id="SM01185">
    <property type="entry name" value="EFP"/>
    <property type="match status" value="1"/>
</dbReference>
<dbReference type="SMART" id="SM00841">
    <property type="entry name" value="Elong-fact-P_C"/>
    <property type="match status" value="1"/>
</dbReference>
<dbReference type="SUPFAM" id="SSF50249">
    <property type="entry name" value="Nucleic acid-binding proteins"/>
    <property type="match status" value="2"/>
</dbReference>
<dbReference type="SUPFAM" id="SSF50104">
    <property type="entry name" value="Translation proteins SH3-like domain"/>
    <property type="match status" value="1"/>
</dbReference>
<dbReference type="PROSITE" id="PS01275">
    <property type="entry name" value="EFP"/>
    <property type="match status" value="1"/>
</dbReference>